<accession>P57697</accession>
<evidence type="ECO:0000255" key="1">
    <source>
        <dbReference type="HAMAP-Rule" id="MF_00289"/>
    </source>
</evidence>
<evidence type="ECO:0000256" key="2">
    <source>
        <dbReference type="SAM" id="MobiDB-lite"/>
    </source>
</evidence>
<gene>
    <name evidence="1" type="primary">psmA</name>
    <name type="ordered locus">VNG_0166G</name>
</gene>
<proteinExistence type="inferred from homology"/>
<dbReference type="EMBL" id="AE004437">
    <property type="protein sequence ID" value="AAG18783.1"/>
    <property type="molecule type" value="Genomic_DNA"/>
</dbReference>
<dbReference type="PIR" id="C84177">
    <property type="entry name" value="C84177"/>
</dbReference>
<dbReference type="RefSeq" id="WP_010902078.1">
    <property type="nucleotide sequence ID" value="NC_002607.1"/>
</dbReference>
<dbReference type="SMR" id="P57697"/>
<dbReference type="FunCoup" id="P57697">
    <property type="interactions" value="105"/>
</dbReference>
<dbReference type="STRING" id="64091.VNG_0166G"/>
<dbReference type="PaxDb" id="64091-VNG_0166G"/>
<dbReference type="GeneID" id="68693143"/>
<dbReference type="KEGG" id="hal:VNG_0166G"/>
<dbReference type="PATRIC" id="fig|64091.14.peg.119"/>
<dbReference type="HOGENOM" id="CLU_035750_4_1_2"/>
<dbReference type="InParanoid" id="P57697"/>
<dbReference type="OrthoDB" id="9421at2157"/>
<dbReference type="PhylomeDB" id="P57697"/>
<dbReference type="Proteomes" id="UP000000554">
    <property type="component" value="Chromosome"/>
</dbReference>
<dbReference type="GO" id="GO:0005737">
    <property type="term" value="C:cytoplasm"/>
    <property type="evidence" value="ECO:0007669"/>
    <property type="project" value="UniProtKB-SubCell"/>
</dbReference>
<dbReference type="GO" id="GO:0019773">
    <property type="term" value="C:proteasome core complex, alpha-subunit complex"/>
    <property type="evidence" value="ECO:0000250"/>
    <property type="project" value="UniProtKB"/>
</dbReference>
<dbReference type="GO" id="GO:0004298">
    <property type="term" value="F:threonine-type endopeptidase activity"/>
    <property type="evidence" value="ECO:0007669"/>
    <property type="project" value="InterPro"/>
</dbReference>
<dbReference type="GO" id="GO:0043161">
    <property type="term" value="P:proteasome-mediated ubiquitin-dependent protein catabolic process"/>
    <property type="evidence" value="ECO:0000318"/>
    <property type="project" value="GO_Central"/>
</dbReference>
<dbReference type="CDD" id="cd03756">
    <property type="entry name" value="proteasome_alpha_archeal"/>
    <property type="match status" value="1"/>
</dbReference>
<dbReference type="FunFam" id="3.60.20.10:FF:000004">
    <property type="entry name" value="Proteasome subunit alpha type-4"/>
    <property type="match status" value="1"/>
</dbReference>
<dbReference type="Gene3D" id="3.60.20.10">
    <property type="entry name" value="Glutamine Phosphoribosylpyrophosphate, subunit 1, domain 1"/>
    <property type="match status" value="1"/>
</dbReference>
<dbReference type="HAMAP" id="MF_00289_A">
    <property type="entry name" value="Proteasome_A_A"/>
    <property type="match status" value="1"/>
</dbReference>
<dbReference type="InterPro" id="IPR029055">
    <property type="entry name" value="Ntn_hydrolases_N"/>
</dbReference>
<dbReference type="InterPro" id="IPR050115">
    <property type="entry name" value="Proteasome_alpha"/>
</dbReference>
<dbReference type="InterPro" id="IPR023332">
    <property type="entry name" value="Proteasome_alpha-type"/>
</dbReference>
<dbReference type="InterPro" id="IPR019982">
    <property type="entry name" value="Proteasome_asu_arc"/>
</dbReference>
<dbReference type="InterPro" id="IPR000426">
    <property type="entry name" value="Proteasome_asu_N"/>
</dbReference>
<dbReference type="InterPro" id="IPR001353">
    <property type="entry name" value="Proteasome_sua/b"/>
</dbReference>
<dbReference type="NCBIfam" id="TIGR03633">
    <property type="entry name" value="arc_protsome_A"/>
    <property type="match status" value="1"/>
</dbReference>
<dbReference type="NCBIfam" id="NF003075">
    <property type="entry name" value="PRK03996.1"/>
    <property type="match status" value="1"/>
</dbReference>
<dbReference type="PANTHER" id="PTHR11599">
    <property type="entry name" value="PROTEASOME SUBUNIT ALPHA/BETA"/>
    <property type="match status" value="1"/>
</dbReference>
<dbReference type="Pfam" id="PF00227">
    <property type="entry name" value="Proteasome"/>
    <property type="match status" value="1"/>
</dbReference>
<dbReference type="Pfam" id="PF10584">
    <property type="entry name" value="Proteasome_A_N"/>
    <property type="match status" value="1"/>
</dbReference>
<dbReference type="SMART" id="SM00948">
    <property type="entry name" value="Proteasome_A_N"/>
    <property type="match status" value="1"/>
</dbReference>
<dbReference type="SUPFAM" id="SSF56235">
    <property type="entry name" value="N-terminal nucleophile aminohydrolases (Ntn hydrolases)"/>
    <property type="match status" value="1"/>
</dbReference>
<dbReference type="PROSITE" id="PS00388">
    <property type="entry name" value="PROTEASOME_ALPHA_1"/>
    <property type="match status" value="1"/>
</dbReference>
<dbReference type="PROSITE" id="PS51475">
    <property type="entry name" value="PROTEASOME_ALPHA_2"/>
    <property type="match status" value="1"/>
</dbReference>
<comment type="function">
    <text evidence="1">Component of the proteasome core, a large protease complex with broad specificity involved in protein degradation.</text>
</comment>
<comment type="activity regulation">
    <text evidence="1">The formation of the proteasomal ATPase PAN-20S proteasome complex, via the docking of the C-termini of PAN into the intersubunit pockets in the alpha-rings, triggers opening of the gate for substrate entry. Interconversion between the open-gate and close-gate conformations leads to a dynamic regulation of the 20S proteasome proteolysis activity.</text>
</comment>
<comment type="subunit">
    <text evidence="1">The 20S proteasome core is composed of 14 alpha and 14 beta subunits that assemble into four stacked heptameric rings, resulting in a barrel-shaped structure. The two inner rings, each composed of seven catalytic beta subunits, are sandwiched by two outer rings, each composed of seven alpha subunits. The catalytic chamber with the active sites is on the inside of the barrel. Has a gated structure, the ends of the cylinder being occluded by the N-termini of the alpha-subunits. Is capped at one or both ends by the proteasome regulatory ATPase, PAN.</text>
</comment>
<comment type="subcellular location">
    <subcellularLocation>
        <location evidence="1">Cytoplasm</location>
    </subcellularLocation>
</comment>
<comment type="similarity">
    <text evidence="1">Belongs to the peptidase T1A family.</text>
</comment>
<organism>
    <name type="scientific">Halobacterium salinarum (strain ATCC 700922 / JCM 11081 / NRC-1)</name>
    <name type="common">Halobacterium halobium</name>
    <dbReference type="NCBI Taxonomy" id="64091"/>
    <lineage>
        <taxon>Archaea</taxon>
        <taxon>Methanobacteriati</taxon>
        <taxon>Methanobacteriota</taxon>
        <taxon>Stenosarchaea group</taxon>
        <taxon>Halobacteria</taxon>
        <taxon>Halobacteriales</taxon>
        <taxon>Halobacteriaceae</taxon>
        <taxon>Halobacterium</taxon>
        <taxon>Halobacterium salinarum NRC-34001</taxon>
    </lineage>
</organism>
<sequence length="253" mass="27343">MQGQNQQQAYDRGITIFSPDGRLYQVEYAREAVKRGTASIGVRTPEGVVLVVDKQTRSPLLEGSSVEKLHKIDDHVGAASAGHVADARQLVDFARQQSQVERVRYDEPIGVRTLTKSVTDHIQQYTQVGGARPFGVALLIAGVEGGEPRLFETDPSGTSNEWKAVAIGSNRGDIQEFLEDEYDAGLSVDDGIDLALRALNEGREDALSGDGVGVGIVDADTGTYRELAADESQSYIDDIEDAADDSDDDDDEE</sequence>
<feature type="chain" id="PRO_0000124170" description="Proteasome subunit alpha">
    <location>
        <begin position="1"/>
        <end position="253"/>
    </location>
</feature>
<feature type="region of interest" description="Disordered" evidence="2">
    <location>
        <begin position="229"/>
        <end position="253"/>
    </location>
</feature>
<feature type="compositionally biased region" description="Acidic residues" evidence="2">
    <location>
        <begin position="237"/>
        <end position="253"/>
    </location>
</feature>
<reference key="1">
    <citation type="journal article" date="2000" name="Proc. Natl. Acad. Sci. U.S.A.">
        <title>Genome sequence of Halobacterium species NRC-1.</title>
        <authorList>
            <person name="Ng W.V."/>
            <person name="Kennedy S.P."/>
            <person name="Mahairas G.G."/>
            <person name="Berquist B."/>
            <person name="Pan M."/>
            <person name="Shukla H.D."/>
            <person name="Lasky S.R."/>
            <person name="Baliga N.S."/>
            <person name="Thorsson V."/>
            <person name="Sbrogna J."/>
            <person name="Swartzell S."/>
            <person name="Weir D."/>
            <person name="Hall J."/>
            <person name="Dahl T.A."/>
            <person name="Welti R."/>
            <person name="Goo Y.A."/>
            <person name="Leithauser B."/>
            <person name="Keller K."/>
            <person name="Cruz R."/>
            <person name="Danson M.J."/>
            <person name="Hough D.W."/>
            <person name="Maddocks D.G."/>
            <person name="Jablonski P.E."/>
            <person name="Krebs M.P."/>
            <person name="Angevine C.M."/>
            <person name="Dale H."/>
            <person name="Isenbarger T.A."/>
            <person name="Peck R.F."/>
            <person name="Pohlschroder M."/>
            <person name="Spudich J.L."/>
            <person name="Jung K.-H."/>
            <person name="Alam M."/>
            <person name="Freitas T."/>
            <person name="Hou S."/>
            <person name="Daniels C.J."/>
            <person name="Dennis P.P."/>
            <person name="Omer A.D."/>
            <person name="Ebhardt H."/>
            <person name="Lowe T.M."/>
            <person name="Liang P."/>
            <person name="Riley M."/>
            <person name="Hood L."/>
            <person name="DasSarma S."/>
        </authorList>
    </citation>
    <scope>NUCLEOTIDE SEQUENCE [LARGE SCALE GENOMIC DNA]</scope>
    <source>
        <strain>ATCC 700922 / JCM 11081 / NRC-1</strain>
    </source>
</reference>
<name>PSA_HALSA</name>
<keyword id="KW-0963">Cytoplasm</keyword>
<keyword id="KW-0647">Proteasome</keyword>
<keyword id="KW-1185">Reference proteome</keyword>
<protein>
    <recommendedName>
        <fullName evidence="1">Proteasome subunit alpha</fullName>
    </recommendedName>
    <alternativeName>
        <fullName evidence="1">20S proteasome alpha subunit</fullName>
    </alternativeName>
    <alternativeName>
        <fullName evidence="1">Proteasome core protein PsmA</fullName>
    </alternativeName>
</protein>